<sequence>MAKDDVIQMQGEVQENLPNATFRVKLENGHVVLGHISGKMRMHYIRILPGDKVTVELTPYDLSRARIVFRAK</sequence>
<organism>
    <name type="scientific">Ralstonia nicotianae (strain ATCC BAA-1114 / GMI1000)</name>
    <name type="common">Ralstonia solanacearum</name>
    <dbReference type="NCBI Taxonomy" id="267608"/>
    <lineage>
        <taxon>Bacteria</taxon>
        <taxon>Pseudomonadati</taxon>
        <taxon>Pseudomonadota</taxon>
        <taxon>Betaproteobacteria</taxon>
        <taxon>Burkholderiales</taxon>
        <taxon>Burkholderiaceae</taxon>
        <taxon>Ralstonia</taxon>
        <taxon>Ralstonia solanacearum species complex</taxon>
    </lineage>
</organism>
<keyword id="KW-0963">Cytoplasm</keyword>
<keyword id="KW-0396">Initiation factor</keyword>
<keyword id="KW-0648">Protein biosynthesis</keyword>
<keyword id="KW-1185">Reference proteome</keyword>
<keyword id="KW-0694">RNA-binding</keyword>
<keyword id="KW-0699">rRNA-binding</keyword>
<accession>Q8XV33</accession>
<feature type="chain" id="PRO_0000095847" description="Translation initiation factor IF-1 1">
    <location>
        <begin position="1"/>
        <end position="72"/>
    </location>
</feature>
<feature type="domain" description="S1-like" evidence="1">
    <location>
        <begin position="1"/>
        <end position="72"/>
    </location>
</feature>
<evidence type="ECO:0000255" key="1">
    <source>
        <dbReference type="HAMAP-Rule" id="MF_00075"/>
    </source>
</evidence>
<proteinExistence type="inferred from homology"/>
<protein>
    <recommendedName>
        <fullName evidence="1">Translation initiation factor IF-1 1</fullName>
    </recommendedName>
</protein>
<dbReference type="EMBL" id="AL646052">
    <property type="protein sequence ID" value="CAD16707.1"/>
    <property type="molecule type" value="Genomic_DNA"/>
</dbReference>
<dbReference type="SMR" id="Q8XV33"/>
<dbReference type="STRING" id="267608.RSc2998"/>
<dbReference type="EnsemblBacteria" id="CAD16707">
    <property type="protein sequence ID" value="CAD16707"/>
    <property type="gene ID" value="RSc2998"/>
</dbReference>
<dbReference type="KEGG" id="rso:RSc2998"/>
<dbReference type="eggNOG" id="COG0361">
    <property type="taxonomic scope" value="Bacteria"/>
</dbReference>
<dbReference type="HOGENOM" id="CLU_151267_1_0_4"/>
<dbReference type="Proteomes" id="UP000001436">
    <property type="component" value="Chromosome"/>
</dbReference>
<dbReference type="GO" id="GO:0005829">
    <property type="term" value="C:cytosol"/>
    <property type="evidence" value="ECO:0007669"/>
    <property type="project" value="TreeGrafter"/>
</dbReference>
<dbReference type="GO" id="GO:0043022">
    <property type="term" value="F:ribosome binding"/>
    <property type="evidence" value="ECO:0007669"/>
    <property type="project" value="UniProtKB-UniRule"/>
</dbReference>
<dbReference type="GO" id="GO:0019843">
    <property type="term" value="F:rRNA binding"/>
    <property type="evidence" value="ECO:0007669"/>
    <property type="project" value="UniProtKB-UniRule"/>
</dbReference>
<dbReference type="GO" id="GO:0003743">
    <property type="term" value="F:translation initiation factor activity"/>
    <property type="evidence" value="ECO:0007669"/>
    <property type="project" value="UniProtKB-UniRule"/>
</dbReference>
<dbReference type="CDD" id="cd04451">
    <property type="entry name" value="S1_IF1"/>
    <property type="match status" value="1"/>
</dbReference>
<dbReference type="FunFam" id="2.40.50.140:FF:000002">
    <property type="entry name" value="Translation initiation factor IF-1"/>
    <property type="match status" value="1"/>
</dbReference>
<dbReference type="Gene3D" id="2.40.50.140">
    <property type="entry name" value="Nucleic acid-binding proteins"/>
    <property type="match status" value="1"/>
</dbReference>
<dbReference type="HAMAP" id="MF_00075">
    <property type="entry name" value="IF_1"/>
    <property type="match status" value="1"/>
</dbReference>
<dbReference type="InterPro" id="IPR012340">
    <property type="entry name" value="NA-bd_OB-fold"/>
</dbReference>
<dbReference type="InterPro" id="IPR006196">
    <property type="entry name" value="RNA-binding_domain_S1_IF1"/>
</dbReference>
<dbReference type="InterPro" id="IPR003029">
    <property type="entry name" value="S1_domain"/>
</dbReference>
<dbReference type="InterPro" id="IPR004368">
    <property type="entry name" value="TIF_IF1"/>
</dbReference>
<dbReference type="NCBIfam" id="TIGR00008">
    <property type="entry name" value="infA"/>
    <property type="match status" value="1"/>
</dbReference>
<dbReference type="PANTHER" id="PTHR33370">
    <property type="entry name" value="TRANSLATION INITIATION FACTOR IF-1, CHLOROPLASTIC"/>
    <property type="match status" value="1"/>
</dbReference>
<dbReference type="PANTHER" id="PTHR33370:SF1">
    <property type="entry name" value="TRANSLATION INITIATION FACTOR IF-1, CHLOROPLASTIC"/>
    <property type="match status" value="1"/>
</dbReference>
<dbReference type="Pfam" id="PF01176">
    <property type="entry name" value="eIF-1a"/>
    <property type="match status" value="1"/>
</dbReference>
<dbReference type="SMART" id="SM00316">
    <property type="entry name" value="S1"/>
    <property type="match status" value="1"/>
</dbReference>
<dbReference type="SUPFAM" id="SSF50249">
    <property type="entry name" value="Nucleic acid-binding proteins"/>
    <property type="match status" value="1"/>
</dbReference>
<dbReference type="PROSITE" id="PS50832">
    <property type="entry name" value="S1_IF1_TYPE"/>
    <property type="match status" value="1"/>
</dbReference>
<gene>
    <name evidence="1" type="primary">infA1</name>
    <name type="ordered locus">RSc2998</name>
    <name type="ORF">RS01113</name>
</gene>
<comment type="function">
    <text evidence="1">One of the essential components for the initiation of protein synthesis. Stabilizes the binding of IF-2 and IF-3 on the 30S subunit to which N-formylmethionyl-tRNA(fMet) subsequently binds. Helps modulate mRNA selection, yielding the 30S pre-initiation complex (PIC). Upon addition of the 50S ribosomal subunit IF-1, IF-2 and IF-3 are released leaving the mature 70S translation initiation complex.</text>
</comment>
<comment type="subunit">
    <text evidence="1">Component of the 30S ribosomal translation pre-initiation complex which assembles on the 30S ribosome in the order IF-2 and IF-3, IF-1 and N-formylmethionyl-tRNA(fMet); mRNA recruitment can occur at any time during PIC assembly.</text>
</comment>
<comment type="subcellular location">
    <subcellularLocation>
        <location evidence="1">Cytoplasm</location>
    </subcellularLocation>
</comment>
<comment type="similarity">
    <text evidence="1">Belongs to the IF-1 family.</text>
</comment>
<name>IF11_RALN1</name>
<reference key="1">
    <citation type="journal article" date="2002" name="Nature">
        <title>Genome sequence of the plant pathogen Ralstonia solanacearum.</title>
        <authorList>
            <person name="Salanoubat M."/>
            <person name="Genin S."/>
            <person name="Artiguenave F."/>
            <person name="Gouzy J."/>
            <person name="Mangenot S."/>
            <person name="Arlat M."/>
            <person name="Billault A."/>
            <person name="Brottier P."/>
            <person name="Camus J.-C."/>
            <person name="Cattolico L."/>
            <person name="Chandler M."/>
            <person name="Choisne N."/>
            <person name="Claudel-Renard C."/>
            <person name="Cunnac S."/>
            <person name="Demange N."/>
            <person name="Gaspin C."/>
            <person name="Lavie M."/>
            <person name="Moisan A."/>
            <person name="Robert C."/>
            <person name="Saurin W."/>
            <person name="Schiex T."/>
            <person name="Siguier P."/>
            <person name="Thebault P."/>
            <person name="Whalen M."/>
            <person name="Wincker P."/>
            <person name="Levy M."/>
            <person name="Weissenbach J."/>
            <person name="Boucher C.A."/>
        </authorList>
    </citation>
    <scope>NUCLEOTIDE SEQUENCE [LARGE SCALE GENOMIC DNA]</scope>
    <source>
        <strain>ATCC BAA-1114 / GMI1000</strain>
    </source>
</reference>